<feature type="chain" id="PRO_0000382683" description="DNA repair protein homolog YobH">
    <location>
        <begin position="1"/>
        <end position="217"/>
    </location>
</feature>
<feature type="domain" description="UmuC" evidence="1">
    <location>
        <begin position="1"/>
        <end position="68"/>
    </location>
</feature>
<feature type="sequence conflict" description="In Ref. 1; AAB84460." evidence="2" ref="1">
    <original>L</original>
    <variation>M</variation>
    <location>
        <position position="15"/>
    </location>
</feature>
<gene>
    <name type="primary">yobH</name>
    <name type="ordered locus">BSU18930</name>
</gene>
<sequence>MAKAIQSSMWREFGLMCTVGIGDNMLLSKLALDLESKKTKSGIARWRYEDVPNRLWKVRPLSKMWGIGGRMERNLNRMGISTVGQLAKFPLELLEKKFGIMGNQLYYHAHGIDLSEIGAPLMQGQISFGKSQILFRDYTKREEIKAVLLEICEEVARRARTYNKVGRTISLGIGYSKDELGGGFHRSKTIDFPTNITMDIYKCCLMFFNKFYSGKKQ</sequence>
<reference key="1">
    <citation type="submission" date="1997-10" db="EMBL/GenBank/DDBJ databases">
        <title>Sequence analysis of the Bacillus subtilis chromosome region between the terC and odhAB loci cloned in a yeast artificial chromosome.</title>
        <authorList>
            <person name="Lapidus A."/>
            <person name="Galleron N."/>
            <person name="Sorokin A."/>
            <person name="Ehrlich D."/>
        </authorList>
    </citation>
    <scope>NUCLEOTIDE SEQUENCE [GENOMIC DNA]</scope>
</reference>
<reference key="2">
    <citation type="journal article" date="1997" name="Nature">
        <title>The complete genome sequence of the Gram-positive bacterium Bacillus subtilis.</title>
        <authorList>
            <person name="Kunst F."/>
            <person name="Ogasawara N."/>
            <person name="Moszer I."/>
            <person name="Albertini A.M."/>
            <person name="Alloni G."/>
            <person name="Azevedo V."/>
            <person name="Bertero M.G."/>
            <person name="Bessieres P."/>
            <person name="Bolotin A."/>
            <person name="Borchert S."/>
            <person name="Borriss R."/>
            <person name="Boursier L."/>
            <person name="Brans A."/>
            <person name="Braun M."/>
            <person name="Brignell S.C."/>
            <person name="Bron S."/>
            <person name="Brouillet S."/>
            <person name="Bruschi C.V."/>
            <person name="Caldwell B."/>
            <person name="Capuano V."/>
            <person name="Carter N.M."/>
            <person name="Choi S.-K."/>
            <person name="Codani J.-J."/>
            <person name="Connerton I.F."/>
            <person name="Cummings N.J."/>
            <person name="Daniel R.A."/>
            <person name="Denizot F."/>
            <person name="Devine K.M."/>
            <person name="Duesterhoeft A."/>
            <person name="Ehrlich S.D."/>
            <person name="Emmerson P.T."/>
            <person name="Entian K.-D."/>
            <person name="Errington J."/>
            <person name="Fabret C."/>
            <person name="Ferrari E."/>
            <person name="Foulger D."/>
            <person name="Fritz C."/>
            <person name="Fujita M."/>
            <person name="Fujita Y."/>
            <person name="Fuma S."/>
            <person name="Galizzi A."/>
            <person name="Galleron N."/>
            <person name="Ghim S.-Y."/>
            <person name="Glaser P."/>
            <person name="Goffeau A."/>
            <person name="Golightly E.J."/>
            <person name="Grandi G."/>
            <person name="Guiseppi G."/>
            <person name="Guy B.J."/>
            <person name="Haga K."/>
            <person name="Haiech J."/>
            <person name="Harwood C.R."/>
            <person name="Henaut A."/>
            <person name="Hilbert H."/>
            <person name="Holsappel S."/>
            <person name="Hosono S."/>
            <person name="Hullo M.-F."/>
            <person name="Itaya M."/>
            <person name="Jones L.-M."/>
            <person name="Joris B."/>
            <person name="Karamata D."/>
            <person name="Kasahara Y."/>
            <person name="Klaerr-Blanchard M."/>
            <person name="Klein C."/>
            <person name="Kobayashi Y."/>
            <person name="Koetter P."/>
            <person name="Koningstein G."/>
            <person name="Krogh S."/>
            <person name="Kumano M."/>
            <person name="Kurita K."/>
            <person name="Lapidus A."/>
            <person name="Lardinois S."/>
            <person name="Lauber J."/>
            <person name="Lazarevic V."/>
            <person name="Lee S.-M."/>
            <person name="Levine A."/>
            <person name="Liu H."/>
            <person name="Masuda S."/>
            <person name="Mauel C."/>
            <person name="Medigue C."/>
            <person name="Medina N."/>
            <person name="Mellado R.P."/>
            <person name="Mizuno M."/>
            <person name="Moestl D."/>
            <person name="Nakai S."/>
            <person name="Noback M."/>
            <person name="Noone D."/>
            <person name="O'Reilly M."/>
            <person name="Ogawa K."/>
            <person name="Ogiwara A."/>
            <person name="Oudega B."/>
            <person name="Park S.-H."/>
            <person name="Parro V."/>
            <person name="Pohl T.M."/>
            <person name="Portetelle D."/>
            <person name="Porwollik S."/>
            <person name="Prescott A.M."/>
            <person name="Presecan E."/>
            <person name="Pujic P."/>
            <person name="Purnelle B."/>
            <person name="Rapoport G."/>
            <person name="Rey M."/>
            <person name="Reynolds S."/>
            <person name="Rieger M."/>
            <person name="Rivolta C."/>
            <person name="Rocha E."/>
            <person name="Roche B."/>
            <person name="Rose M."/>
            <person name="Sadaie Y."/>
            <person name="Sato T."/>
            <person name="Scanlan E."/>
            <person name="Schleich S."/>
            <person name="Schroeter R."/>
            <person name="Scoffone F."/>
            <person name="Sekiguchi J."/>
            <person name="Sekowska A."/>
            <person name="Seror S.J."/>
            <person name="Serror P."/>
            <person name="Shin B.-S."/>
            <person name="Soldo B."/>
            <person name="Sorokin A."/>
            <person name="Tacconi E."/>
            <person name="Takagi T."/>
            <person name="Takahashi H."/>
            <person name="Takemaru K."/>
            <person name="Takeuchi M."/>
            <person name="Tamakoshi A."/>
            <person name="Tanaka T."/>
            <person name="Terpstra P."/>
            <person name="Tognoni A."/>
            <person name="Tosato V."/>
            <person name="Uchiyama S."/>
            <person name="Vandenbol M."/>
            <person name="Vannier F."/>
            <person name="Vassarotti A."/>
            <person name="Viari A."/>
            <person name="Wambutt R."/>
            <person name="Wedler E."/>
            <person name="Wedler H."/>
            <person name="Weitzenegger T."/>
            <person name="Winters P."/>
            <person name="Wipat A."/>
            <person name="Yamamoto H."/>
            <person name="Yamane K."/>
            <person name="Yasumoto K."/>
            <person name="Yata K."/>
            <person name="Yoshida K."/>
            <person name="Yoshikawa H.-F."/>
            <person name="Zumstein E."/>
            <person name="Yoshikawa H."/>
            <person name="Danchin A."/>
        </authorList>
    </citation>
    <scope>NUCLEOTIDE SEQUENCE [LARGE SCALE GENOMIC DNA]</scope>
    <source>
        <strain>168</strain>
    </source>
</reference>
<reference key="3">
    <citation type="journal article" date="2009" name="Microbiology">
        <title>From a consortium sequence to a unified sequence: the Bacillus subtilis 168 reference genome a decade later.</title>
        <authorList>
            <person name="Barbe V."/>
            <person name="Cruveiller S."/>
            <person name="Kunst F."/>
            <person name="Lenoble P."/>
            <person name="Meurice G."/>
            <person name="Sekowska A."/>
            <person name="Vallenet D."/>
            <person name="Wang T."/>
            <person name="Moszer I."/>
            <person name="Medigue C."/>
            <person name="Danchin A."/>
        </authorList>
    </citation>
    <scope>SEQUENCE REVISION</scope>
</reference>
<comment type="similarity">
    <text evidence="2">Belongs to the DNA polymerase type-Y family.</text>
</comment>
<comment type="caution">
    <text evidence="2">Could be the product of a pseudogene. This sequence is shorter than orthologs and lacks the conserved active site Glu and metal-binding site Asp residues.</text>
</comment>
<name>YOBH_BACSU</name>
<organism>
    <name type="scientific">Bacillus subtilis (strain 168)</name>
    <dbReference type="NCBI Taxonomy" id="224308"/>
    <lineage>
        <taxon>Bacteria</taxon>
        <taxon>Bacillati</taxon>
        <taxon>Bacillota</taxon>
        <taxon>Bacilli</taxon>
        <taxon>Bacillales</taxon>
        <taxon>Bacillaceae</taxon>
        <taxon>Bacillus</taxon>
    </lineage>
</organism>
<evidence type="ECO:0000255" key="1">
    <source>
        <dbReference type="PROSITE-ProRule" id="PRU00216"/>
    </source>
</evidence>
<evidence type="ECO:0000305" key="2"/>
<keyword id="KW-1185">Reference proteome</keyword>
<accession>C0SPA8</accession>
<accession>O34487</accession>
<accession>Q796E4</accession>
<dbReference type="EMBL" id="AF027868">
    <property type="protein sequence ID" value="AAB84460.1"/>
    <property type="molecule type" value="Genomic_DNA"/>
</dbReference>
<dbReference type="EMBL" id="AL009126">
    <property type="protein sequence ID" value="CAB13785.2"/>
    <property type="molecule type" value="Genomic_DNA"/>
</dbReference>
<dbReference type="RefSeq" id="NP_389774.2">
    <property type="nucleotide sequence ID" value="NC_000964.3"/>
</dbReference>
<dbReference type="SMR" id="C0SPA8"/>
<dbReference type="FunCoup" id="C0SPA8">
    <property type="interactions" value="28"/>
</dbReference>
<dbReference type="STRING" id="224308.BSU18930"/>
<dbReference type="PaxDb" id="224308-BSU18930"/>
<dbReference type="KEGG" id="bsu:BSU18930"/>
<dbReference type="PATRIC" id="fig|224308.179.peg.2070"/>
<dbReference type="eggNOG" id="COG0389">
    <property type="taxonomic scope" value="Bacteria"/>
</dbReference>
<dbReference type="InParanoid" id="C0SPA8"/>
<dbReference type="PhylomeDB" id="C0SPA8"/>
<dbReference type="BioCyc" id="BSUB:BSU18930-MONOMER"/>
<dbReference type="Proteomes" id="UP000001570">
    <property type="component" value="Chromosome"/>
</dbReference>
<dbReference type="GO" id="GO:0003684">
    <property type="term" value="F:damaged DNA binding"/>
    <property type="evidence" value="ECO:0007669"/>
    <property type="project" value="InterPro"/>
</dbReference>
<dbReference type="GO" id="GO:0003887">
    <property type="term" value="F:DNA-directed DNA polymerase activity"/>
    <property type="evidence" value="ECO:0000318"/>
    <property type="project" value="GO_Central"/>
</dbReference>
<dbReference type="GO" id="GO:0042276">
    <property type="term" value="P:error-prone translesion synthesis"/>
    <property type="evidence" value="ECO:0000318"/>
    <property type="project" value="GO_Central"/>
</dbReference>
<dbReference type="GO" id="GO:0009432">
    <property type="term" value="P:SOS response"/>
    <property type="evidence" value="ECO:0000318"/>
    <property type="project" value="GO_Central"/>
</dbReference>
<dbReference type="Gene3D" id="3.30.70.270">
    <property type="match status" value="1"/>
</dbReference>
<dbReference type="Gene3D" id="1.10.150.20">
    <property type="entry name" value="5' to 3' exonuclease, C-terminal subdomain"/>
    <property type="match status" value="1"/>
</dbReference>
<dbReference type="Gene3D" id="3.30.1490.100">
    <property type="entry name" value="DNA polymerase, Y-family, little finger domain"/>
    <property type="match status" value="1"/>
</dbReference>
<dbReference type="InterPro" id="IPR043502">
    <property type="entry name" value="DNA/RNA_pol_sf"/>
</dbReference>
<dbReference type="InterPro" id="IPR036775">
    <property type="entry name" value="DNA_pol_Y-fam_lit_finger_sf"/>
</dbReference>
<dbReference type="InterPro" id="IPR017961">
    <property type="entry name" value="DNA_pol_Y-fam_little_finger"/>
</dbReference>
<dbReference type="InterPro" id="IPR050116">
    <property type="entry name" value="DNA_polymerase-Y"/>
</dbReference>
<dbReference type="InterPro" id="IPR053848">
    <property type="entry name" value="IMS_HHH_1"/>
</dbReference>
<dbReference type="InterPro" id="IPR043128">
    <property type="entry name" value="Rev_trsase/Diguanyl_cyclase"/>
</dbReference>
<dbReference type="InterPro" id="IPR001126">
    <property type="entry name" value="UmuC"/>
</dbReference>
<dbReference type="PANTHER" id="PTHR11076">
    <property type="entry name" value="DNA REPAIR POLYMERASE UMUC / TRANSFERASE FAMILY MEMBER"/>
    <property type="match status" value="1"/>
</dbReference>
<dbReference type="PANTHER" id="PTHR11076:SF35">
    <property type="entry name" value="DNA REPAIR PROTEIN HOMOLOG YOBH"/>
    <property type="match status" value="1"/>
</dbReference>
<dbReference type="Pfam" id="PF11799">
    <property type="entry name" value="IMS_C"/>
    <property type="match status" value="1"/>
</dbReference>
<dbReference type="Pfam" id="PF21999">
    <property type="entry name" value="IMS_HHH_1"/>
    <property type="match status" value="1"/>
</dbReference>
<dbReference type="SUPFAM" id="SSF56672">
    <property type="entry name" value="DNA/RNA polymerases"/>
    <property type="match status" value="1"/>
</dbReference>
<dbReference type="SUPFAM" id="SSF100879">
    <property type="entry name" value="Lesion bypass DNA polymerase (Y-family), little finger domain"/>
    <property type="match status" value="1"/>
</dbReference>
<dbReference type="PROSITE" id="PS50173">
    <property type="entry name" value="UMUC"/>
    <property type="match status" value="1"/>
</dbReference>
<proteinExistence type="uncertain"/>
<protein>
    <recommendedName>
        <fullName>DNA repair protein homolog YobH</fullName>
    </recommendedName>
</protein>